<name>RL13_CAEEL</name>
<evidence type="ECO:0000250" key="1">
    <source>
        <dbReference type="UniProtKB" id="P26373"/>
    </source>
</evidence>
<evidence type="ECO:0000305" key="2"/>
<feature type="chain" id="PRO_0000192927" description="Large ribosomal subunit protein eL13">
    <location>
        <begin position="1"/>
        <end position="207"/>
    </location>
</feature>
<feature type="splice variant" id="VSP_020726" description="In isoform b." evidence="2">
    <location>
        <begin position="85"/>
        <end position="203"/>
    </location>
</feature>
<keyword id="KW-0002">3D-structure</keyword>
<keyword id="KW-0025">Alternative splicing</keyword>
<keyword id="KW-0963">Cytoplasm</keyword>
<keyword id="KW-1185">Reference proteome</keyword>
<keyword id="KW-0687">Ribonucleoprotein</keyword>
<keyword id="KW-0689">Ribosomal protein</keyword>
<gene>
    <name type="primary">rpl-13</name>
    <name type="ORF">C32E8.2</name>
</gene>
<sequence length="207" mass="23753">MAPRGNQMLGNAHFRKHWHKRIKTWFDQPARKLRRRQNRQAKAVEIAPRPVAGLLRSVVRCPQKRYNTKTRLGRGFSLQELKAAGISQAQARTIGIAVDVRRTNKTAEGLKANADRLKEYKAKLILFPKKASAPKKGDSSAEELKVAAQLRGDVLPLSHTITFDEPRQVTDAERKVEIFRLLRKERADKKYRGKREKRAREAAEENK</sequence>
<comment type="function">
    <text evidence="1">Component of the ribosome, a large ribonucleoprotein complex responsible for the synthesis of proteins in the cell. The small ribosomal subunit (SSU) binds messenger RNAs (mRNAs) and translates the encoded message by selecting cognate aminoacyl-transfer RNA (tRNA) molecules. The large subunit (LSU) contains the ribosomal catalytic site termed the peptidyl transferase center (PTC), which catalyzes the formation of peptide bonds, thereby polymerizing the amino acids delivered by tRNAs into a polypeptide chain. The nascent polypeptides leave the ribosome through a tunnel in the LSU and interact with protein factors that function in enzymatic processing, targeting, and the membrane insertion of nascent chains at the exit of the ribosomal tunnel. As part of the LSU, it is probably required for its formation and the maturation of rRNAs.</text>
</comment>
<comment type="subunit">
    <text evidence="1">Component of the 60S large ribosomal subunit (LSU).</text>
</comment>
<comment type="subcellular location">
    <subcellularLocation>
        <location evidence="1">Cytoplasm</location>
    </subcellularLocation>
</comment>
<comment type="alternative products">
    <event type="alternative splicing"/>
    <isoform>
        <id>P91128-1</id>
        <name>a</name>
        <sequence type="displayed"/>
    </isoform>
    <isoform>
        <id>P91128-2</id>
        <name>b</name>
        <sequence type="described" ref="VSP_020726"/>
    </isoform>
</comment>
<comment type="similarity">
    <text evidence="2">Belongs to the eukaryotic ribosomal protein eL13 family.</text>
</comment>
<organism>
    <name type="scientific">Caenorhabditis elegans</name>
    <dbReference type="NCBI Taxonomy" id="6239"/>
    <lineage>
        <taxon>Eukaryota</taxon>
        <taxon>Metazoa</taxon>
        <taxon>Ecdysozoa</taxon>
        <taxon>Nematoda</taxon>
        <taxon>Chromadorea</taxon>
        <taxon>Rhabditida</taxon>
        <taxon>Rhabditina</taxon>
        <taxon>Rhabditomorpha</taxon>
        <taxon>Rhabditoidea</taxon>
        <taxon>Rhabditidae</taxon>
        <taxon>Peloderinae</taxon>
        <taxon>Caenorhabditis</taxon>
    </lineage>
</organism>
<dbReference type="EMBL" id="FO080749">
    <property type="protein sequence ID" value="CCD66399.1"/>
    <property type="molecule type" value="Genomic_DNA"/>
</dbReference>
<dbReference type="EMBL" id="FO080749">
    <property type="protein sequence ID" value="CCD66400.1"/>
    <property type="molecule type" value="Genomic_DNA"/>
</dbReference>
<dbReference type="PIR" id="T25599">
    <property type="entry name" value="T25599"/>
</dbReference>
<dbReference type="RefSeq" id="NP_001021017.1">
    <molecule id="P91128-1"/>
    <property type="nucleotide sequence ID" value="NM_001025846.6"/>
</dbReference>
<dbReference type="PDB" id="9BH5">
    <property type="method" value="EM"/>
    <property type="resolution" value="2.63 A"/>
    <property type="chains" value="CL=1-207"/>
</dbReference>
<dbReference type="PDB" id="9CAI">
    <property type="method" value="EM"/>
    <property type="resolution" value="2.59 A"/>
    <property type="chains" value="CL=1-207"/>
</dbReference>
<dbReference type="PDBsum" id="9BH5"/>
<dbReference type="PDBsum" id="9CAI"/>
<dbReference type="EMDB" id="EMD-44533"/>
<dbReference type="EMDB" id="EMD-45392"/>
<dbReference type="SMR" id="P91128"/>
<dbReference type="BioGRID" id="37423">
    <property type="interactions" value="103"/>
</dbReference>
<dbReference type="DIP" id="DIP-25306N"/>
<dbReference type="FunCoup" id="P91128">
    <property type="interactions" value="2054"/>
</dbReference>
<dbReference type="STRING" id="6239.C32E8.2a.2"/>
<dbReference type="iPTMnet" id="P91128"/>
<dbReference type="PaxDb" id="6239-C32E8.2a"/>
<dbReference type="PeptideAtlas" id="P91128"/>
<dbReference type="EnsemblMetazoa" id="C32E8.2a.1">
    <molecule id="P91128-1"/>
    <property type="protein sequence ID" value="C32E8.2a.1"/>
    <property type="gene ID" value="WBGene00004425"/>
</dbReference>
<dbReference type="GeneID" id="171949"/>
<dbReference type="KEGG" id="cel:CELE_C32E8.2"/>
<dbReference type="UCSC" id="C32E8.2a.1">
    <molecule id="P91128-1"/>
    <property type="organism name" value="c. elegans"/>
</dbReference>
<dbReference type="AGR" id="WB:WBGene00004425"/>
<dbReference type="CTD" id="171949"/>
<dbReference type="WormBase" id="C32E8.2a">
    <molecule id="P91128-1"/>
    <property type="protein sequence ID" value="CE08526"/>
    <property type="gene ID" value="WBGene00004425"/>
    <property type="gene designation" value="rpl-13"/>
</dbReference>
<dbReference type="eggNOG" id="KOG3295">
    <property type="taxonomic scope" value="Eukaryota"/>
</dbReference>
<dbReference type="GeneTree" id="ENSGT00390000007818"/>
<dbReference type="HOGENOM" id="CLU_075696_1_0_1"/>
<dbReference type="InParanoid" id="P91128"/>
<dbReference type="OMA" id="HWHKRIK"/>
<dbReference type="OrthoDB" id="10264538at2759"/>
<dbReference type="PhylomeDB" id="P91128"/>
<dbReference type="Reactome" id="R-CEL-156827">
    <property type="pathway name" value="L13a-mediated translational silencing of Ceruloplasmin expression"/>
</dbReference>
<dbReference type="Reactome" id="R-CEL-1799339">
    <property type="pathway name" value="SRP-dependent cotranslational protein targeting to membrane"/>
</dbReference>
<dbReference type="Reactome" id="R-CEL-72689">
    <property type="pathway name" value="Formation of a pool of free 40S subunits"/>
</dbReference>
<dbReference type="Reactome" id="R-CEL-72706">
    <property type="pathway name" value="GTP hydrolysis and joining of the 60S ribosomal subunit"/>
</dbReference>
<dbReference type="Reactome" id="R-CEL-975956">
    <property type="pathway name" value="Nonsense Mediated Decay (NMD) independent of the Exon Junction Complex (EJC)"/>
</dbReference>
<dbReference type="Reactome" id="R-CEL-975957">
    <property type="pathway name" value="Nonsense Mediated Decay (NMD) enhanced by the Exon Junction Complex (EJC)"/>
</dbReference>
<dbReference type="PRO" id="PR:P91128"/>
<dbReference type="Proteomes" id="UP000001940">
    <property type="component" value="Chromosome I"/>
</dbReference>
<dbReference type="Bgee" id="WBGene00004425">
    <property type="expression patterns" value="Expressed in larva and 4 other cell types or tissues"/>
</dbReference>
<dbReference type="GO" id="GO:0005829">
    <property type="term" value="C:cytosol"/>
    <property type="evidence" value="ECO:0000250"/>
    <property type="project" value="UniProtKB"/>
</dbReference>
<dbReference type="GO" id="GO:0022625">
    <property type="term" value="C:cytosolic large ribosomal subunit"/>
    <property type="evidence" value="ECO:0000318"/>
    <property type="project" value="GO_Central"/>
</dbReference>
<dbReference type="GO" id="GO:0003723">
    <property type="term" value="F:RNA binding"/>
    <property type="evidence" value="ECO:0000318"/>
    <property type="project" value="GO_Central"/>
</dbReference>
<dbReference type="GO" id="GO:0003735">
    <property type="term" value="F:structural constituent of ribosome"/>
    <property type="evidence" value="ECO:0000318"/>
    <property type="project" value="GO_Central"/>
</dbReference>
<dbReference type="GO" id="GO:0006412">
    <property type="term" value="P:translation"/>
    <property type="evidence" value="ECO:0007669"/>
    <property type="project" value="InterPro"/>
</dbReference>
<dbReference type="FunFam" id="1.20.5.110:FF:000003">
    <property type="entry name" value="60S ribosomal protein L13"/>
    <property type="match status" value="1"/>
</dbReference>
<dbReference type="Gene3D" id="1.20.5.110">
    <property type="match status" value="1"/>
</dbReference>
<dbReference type="HAMAP" id="MF_00499">
    <property type="entry name" value="Ribosomal_eL13"/>
    <property type="match status" value="1"/>
</dbReference>
<dbReference type="InterPro" id="IPR001380">
    <property type="entry name" value="Ribosomal_eL13"/>
</dbReference>
<dbReference type="InterPro" id="IPR018256">
    <property type="entry name" value="Ribosomal_eL13_CS"/>
</dbReference>
<dbReference type="PANTHER" id="PTHR11722">
    <property type="entry name" value="60S RIBOSOMAL PROTEIN L13"/>
    <property type="match status" value="1"/>
</dbReference>
<dbReference type="PANTHER" id="PTHR11722:SF0">
    <property type="entry name" value="LARGE RIBOSOMAL SUBUNIT PROTEIN EL13"/>
    <property type="match status" value="1"/>
</dbReference>
<dbReference type="Pfam" id="PF01294">
    <property type="entry name" value="Ribosomal_L13e"/>
    <property type="match status" value="1"/>
</dbReference>
<dbReference type="PROSITE" id="PS01104">
    <property type="entry name" value="RIBOSOMAL_L13E"/>
    <property type="match status" value="1"/>
</dbReference>
<reference key="1">
    <citation type="journal article" date="1998" name="Science">
        <title>Genome sequence of the nematode C. elegans: a platform for investigating biology.</title>
        <authorList>
            <consortium name="The C. elegans sequencing consortium"/>
        </authorList>
    </citation>
    <scope>NUCLEOTIDE SEQUENCE [LARGE SCALE GENOMIC DNA]</scope>
    <scope>ALTERNATIVE SPLICING</scope>
    <source>
        <strain>Bristol N2</strain>
    </source>
</reference>
<protein>
    <recommendedName>
        <fullName evidence="2">Large ribosomal subunit protein eL13</fullName>
    </recommendedName>
    <alternativeName>
        <fullName>60S ribosomal protein L13</fullName>
    </alternativeName>
</protein>
<proteinExistence type="evidence at protein level"/>
<accession>P91128</accession>
<accession>Q86GU2</accession>